<name>ZGLP1_MOUSE</name>
<sequence length="266" mass="29107">MEAAQAGDLTRRQELLAPPCLDTESLRKSRPPALEPGALRCLTPNIRSLWPTCQDSVSTALPFLQEKEKGLPGSPSPATQVLGSCWELMVIGMSDHLSMARNPRGTQCPNLEISSATSPASLQRRPRKQLNPRMGIEKVDPRFKGVTLEFQIQPDSSLQIVPTYSLPGRSCSQKLPASPSKALASPGSSEALGPRRCASCRTQRTPLWRDAEDGTPLCNACGIRYKKYGTRCSSCWLVPRKSIQPKRLCGRCGMSQDPHLSPTQEL</sequence>
<accession>Q1WG82</accession>
<gene>
    <name evidence="6 7" type="primary">Zglp1</name>
    <name evidence="6" type="synonym">Glp1</name>
</gene>
<feature type="chain" id="PRO_0000317558" description="GATA-type zinc finger protein 1">
    <location>
        <begin position="1"/>
        <end position="266"/>
    </location>
</feature>
<feature type="zinc finger region" description="GATA-type" evidence="1">
    <location>
        <begin position="197"/>
        <end position="221"/>
    </location>
</feature>
<feature type="region of interest" description="Disordered" evidence="2">
    <location>
        <begin position="1"/>
        <end position="31"/>
    </location>
</feature>
<feature type="region of interest" description="Disordered" evidence="2">
    <location>
        <begin position="106"/>
        <end position="129"/>
    </location>
</feature>
<feature type="region of interest" description="Disordered" evidence="2">
    <location>
        <begin position="171"/>
        <end position="191"/>
    </location>
</feature>
<feature type="compositionally biased region" description="Polar residues" evidence="2">
    <location>
        <begin position="106"/>
        <end position="121"/>
    </location>
</feature>
<organism>
    <name type="scientific">Mus musculus</name>
    <name type="common">Mouse</name>
    <dbReference type="NCBI Taxonomy" id="10090"/>
    <lineage>
        <taxon>Eukaryota</taxon>
        <taxon>Metazoa</taxon>
        <taxon>Chordata</taxon>
        <taxon>Craniata</taxon>
        <taxon>Vertebrata</taxon>
        <taxon>Euteleostomi</taxon>
        <taxon>Mammalia</taxon>
        <taxon>Eutheria</taxon>
        <taxon>Euarchontoglires</taxon>
        <taxon>Glires</taxon>
        <taxon>Rodentia</taxon>
        <taxon>Myomorpha</taxon>
        <taxon>Muroidea</taxon>
        <taxon>Muridae</taxon>
        <taxon>Murinae</taxon>
        <taxon>Mus</taxon>
        <taxon>Mus</taxon>
    </lineage>
</organism>
<dbReference type="EMBL" id="DQ286956">
    <property type="protein sequence ID" value="ABB89941.1"/>
    <property type="molecule type" value="mRNA"/>
</dbReference>
<dbReference type="EMBL" id="AC163637">
    <property type="status" value="NOT_ANNOTATED_CDS"/>
    <property type="molecule type" value="Genomic_DNA"/>
</dbReference>
<dbReference type="CCDS" id="CCDS40549.1"/>
<dbReference type="RefSeq" id="NP_001096638.1">
    <property type="nucleotide sequence ID" value="NM_001103168.1"/>
</dbReference>
<dbReference type="FunCoup" id="Q1WG82">
    <property type="interactions" value="422"/>
</dbReference>
<dbReference type="STRING" id="10090.ENSMUSP00000111157"/>
<dbReference type="iPTMnet" id="Q1WG82"/>
<dbReference type="PhosphoSitePlus" id="Q1WG82"/>
<dbReference type="PaxDb" id="10090-ENSMUSP00000111157"/>
<dbReference type="ProteomicsDB" id="275150"/>
<dbReference type="Antibodypedia" id="42858">
    <property type="antibodies" value="97 antibodies from 20 providers"/>
</dbReference>
<dbReference type="Ensembl" id="ENSMUST00000115494.3">
    <property type="protein sequence ID" value="ENSMUSP00000111157.3"/>
    <property type="gene ID" value="ENSMUSG00000079681.4"/>
</dbReference>
<dbReference type="GeneID" id="100009600"/>
<dbReference type="KEGG" id="mmu:100009600"/>
<dbReference type="UCSC" id="uc009veu.1">
    <property type="organism name" value="mouse"/>
</dbReference>
<dbReference type="AGR" id="MGI:3696042"/>
<dbReference type="CTD" id="100125288"/>
<dbReference type="MGI" id="MGI:3696042">
    <property type="gene designation" value="Zglp1"/>
</dbReference>
<dbReference type="VEuPathDB" id="HostDB:ENSMUSG00000079681"/>
<dbReference type="eggNOG" id="KOG1601">
    <property type="taxonomic scope" value="Eukaryota"/>
</dbReference>
<dbReference type="GeneTree" id="ENSGT00470000042444"/>
<dbReference type="HOGENOM" id="CLU_088967_0_0_1"/>
<dbReference type="InParanoid" id="Q1WG82"/>
<dbReference type="OMA" id="ALGPCWE"/>
<dbReference type="OrthoDB" id="2162994at2759"/>
<dbReference type="PhylomeDB" id="Q1WG82"/>
<dbReference type="BioGRID-ORCS" id="100009600">
    <property type="hits" value="1 hit in 79 CRISPR screens"/>
</dbReference>
<dbReference type="PRO" id="PR:Q1WG82"/>
<dbReference type="Proteomes" id="UP000000589">
    <property type="component" value="Chromosome 9"/>
</dbReference>
<dbReference type="RNAct" id="Q1WG82">
    <property type="molecule type" value="protein"/>
</dbReference>
<dbReference type="Bgee" id="ENSMUSG00000079681">
    <property type="expression patterns" value="Expressed in blastoderm cell in morula and 54 other cell types or tissues"/>
</dbReference>
<dbReference type="GO" id="GO:0005634">
    <property type="term" value="C:nucleus"/>
    <property type="evidence" value="ECO:0000314"/>
    <property type="project" value="MGI"/>
</dbReference>
<dbReference type="GO" id="GO:0000981">
    <property type="term" value="F:DNA-binding transcription factor activity, RNA polymerase II-specific"/>
    <property type="evidence" value="ECO:0000314"/>
    <property type="project" value="ARUK-UCL"/>
</dbReference>
<dbReference type="GO" id="GO:0043565">
    <property type="term" value="F:sequence-specific DNA binding"/>
    <property type="evidence" value="ECO:0007669"/>
    <property type="project" value="InterPro"/>
</dbReference>
<dbReference type="GO" id="GO:0008270">
    <property type="term" value="F:zinc ion binding"/>
    <property type="evidence" value="ECO:0007669"/>
    <property type="project" value="UniProtKB-KW"/>
</dbReference>
<dbReference type="GO" id="GO:0000122">
    <property type="term" value="P:negative regulation of transcription by RNA polymerase II"/>
    <property type="evidence" value="ECO:0000314"/>
    <property type="project" value="UniProtKB"/>
</dbReference>
<dbReference type="GO" id="GO:0048599">
    <property type="term" value="P:oocyte development"/>
    <property type="evidence" value="ECO:0000314"/>
    <property type="project" value="UniProtKB"/>
</dbReference>
<dbReference type="GO" id="GO:0045944">
    <property type="term" value="P:positive regulation of transcription by RNA polymerase II"/>
    <property type="evidence" value="ECO:0000314"/>
    <property type="project" value="UniProtKB"/>
</dbReference>
<dbReference type="GO" id="GO:0007283">
    <property type="term" value="P:spermatogenesis"/>
    <property type="evidence" value="ECO:0000315"/>
    <property type="project" value="UniProtKB"/>
</dbReference>
<dbReference type="CDD" id="cd00202">
    <property type="entry name" value="ZnF_GATA"/>
    <property type="match status" value="1"/>
</dbReference>
<dbReference type="FunFam" id="3.30.50.10:FF:000040">
    <property type="entry name" value="GATA-type zinc finger protein 1"/>
    <property type="match status" value="1"/>
</dbReference>
<dbReference type="Gene3D" id="3.30.50.10">
    <property type="entry name" value="Erythroid Transcription Factor GATA-1, subunit A"/>
    <property type="match status" value="1"/>
</dbReference>
<dbReference type="InterPro" id="IPR053116">
    <property type="entry name" value="GATA-type_ZnF_Regulator"/>
</dbReference>
<dbReference type="InterPro" id="IPR000679">
    <property type="entry name" value="Znf_GATA"/>
</dbReference>
<dbReference type="InterPro" id="IPR013088">
    <property type="entry name" value="Znf_NHR/GATA"/>
</dbReference>
<dbReference type="PANTHER" id="PTHR47341">
    <property type="entry name" value="GATA-TYPE ZINC FINGER PROTEIN 1"/>
    <property type="match status" value="1"/>
</dbReference>
<dbReference type="PANTHER" id="PTHR47341:SF1">
    <property type="entry name" value="GATA-TYPE ZINC FINGER PROTEIN 1"/>
    <property type="match status" value="1"/>
</dbReference>
<dbReference type="Pfam" id="PF00320">
    <property type="entry name" value="GATA"/>
    <property type="match status" value="1"/>
</dbReference>
<dbReference type="PRINTS" id="PR00619">
    <property type="entry name" value="GATAZNFINGER"/>
</dbReference>
<dbReference type="SMART" id="SM00401">
    <property type="entry name" value="ZnF_GATA"/>
    <property type="match status" value="1"/>
</dbReference>
<dbReference type="SUPFAM" id="SSF57716">
    <property type="entry name" value="Glucocorticoid receptor-like (DNA-binding domain)"/>
    <property type="match status" value="1"/>
</dbReference>
<dbReference type="PROSITE" id="PS50114">
    <property type="entry name" value="GATA_ZN_FINGER_2"/>
    <property type="match status" value="1"/>
</dbReference>
<proteinExistence type="evidence at transcript level"/>
<reference key="1">
    <citation type="journal article" date="2007" name="Dev. Biol.">
        <title>GLP-1: a novel zinc finger protein required in somatic cells of the gonad for germ cell development.</title>
        <authorList>
            <person name="Li S."/>
            <person name="Lu M.M."/>
            <person name="Zhou D."/>
            <person name="Hammes S.R."/>
            <person name="Morrisey E.E."/>
        </authorList>
    </citation>
    <scope>NUCLEOTIDE SEQUENCE [MRNA]</scope>
    <scope>FUNCTION</scope>
    <scope>SUBCELLULAR LOCATION</scope>
    <scope>TISSUE SPECIFICITY</scope>
    <scope>DISRUPTION PHENOTYPE</scope>
    <source>
        <strain>C57BL/6J</strain>
    </source>
</reference>
<reference key="2">
    <citation type="journal article" date="2009" name="PLoS Biol.">
        <title>Lineage-specific biology revealed by a finished genome assembly of the mouse.</title>
        <authorList>
            <person name="Church D.M."/>
            <person name="Goodstadt L."/>
            <person name="Hillier L.W."/>
            <person name="Zody M.C."/>
            <person name="Goldstein S."/>
            <person name="She X."/>
            <person name="Bult C.J."/>
            <person name="Agarwala R."/>
            <person name="Cherry J.L."/>
            <person name="DiCuccio M."/>
            <person name="Hlavina W."/>
            <person name="Kapustin Y."/>
            <person name="Meric P."/>
            <person name="Maglott D."/>
            <person name="Birtle Z."/>
            <person name="Marques A.C."/>
            <person name="Graves T."/>
            <person name="Zhou S."/>
            <person name="Teague B."/>
            <person name="Potamousis K."/>
            <person name="Churas C."/>
            <person name="Place M."/>
            <person name="Herschleb J."/>
            <person name="Runnheim R."/>
            <person name="Forrest D."/>
            <person name="Amos-Landgraf J."/>
            <person name="Schwartz D.C."/>
            <person name="Cheng Z."/>
            <person name="Lindblad-Toh K."/>
            <person name="Eichler E.E."/>
            <person name="Ponting C.P."/>
        </authorList>
    </citation>
    <scope>NUCLEOTIDE SEQUENCE [LARGE SCALE GENOMIC DNA]</scope>
    <source>
        <strain>C57BL/6J</strain>
    </source>
</reference>
<reference key="3">
    <citation type="journal article" date="2011" name="Reproduction">
        <title>GATA-like protein-1 (GLP-1) is required for normal germ cell development during embryonic oogenesis.</title>
        <authorList>
            <person name="Strauss T.J."/>
            <person name="Castrillon D.H."/>
            <person name="Hammes S.R."/>
        </authorList>
    </citation>
    <scope>FUNCTION</scope>
    <scope>DEVELOPMENTAL STAGE</scope>
</reference>
<reference key="4">
    <citation type="journal article" date="2020" name="Science">
        <title>ZGLP1 is a determinant for the oogenic fate in mice.</title>
        <authorList>
            <person name="Nagaoka S.I."/>
            <person name="Nakaki F."/>
            <person name="Miyauchi H."/>
            <person name="Nosaka Y."/>
            <person name="Ohta H."/>
            <person name="Yabuta Y."/>
            <person name="Kurimoto K."/>
            <person name="Hayashi K."/>
            <person name="Nakamura T."/>
            <person name="Yamamoto T."/>
            <person name="Saitou M."/>
        </authorList>
    </citation>
    <scope>FUNCTION</scope>
    <scope>DEVELOPMENTAL STAGE</scope>
    <scope>INDUCTION</scope>
    <scope>DISRUPTION PHENOTYPE</scope>
</reference>
<keyword id="KW-0010">Activator</keyword>
<keyword id="KW-0217">Developmental protein</keyword>
<keyword id="KW-0221">Differentiation</keyword>
<keyword id="KW-0238">DNA-binding</keyword>
<keyword id="KW-0479">Metal-binding</keyword>
<keyword id="KW-0539">Nucleus</keyword>
<keyword id="KW-0896">Oogenesis</keyword>
<keyword id="KW-1185">Reference proteome</keyword>
<keyword id="KW-0678">Repressor</keyword>
<keyword id="KW-0744">Spermatogenesis</keyword>
<keyword id="KW-0804">Transcription</keyword>
<keyword id="KW-0805">Transcription regulation</keyword>
<keyword id="KW-0862">Zinc</keyword>
<keyword id="KW-0863">Zinc-finger</keyword>
<protein>
    <recommendedName>
        <fullName evidence="8">GATA-type zinc finger protein 1</fullName>
    </recommendedName>
    <alternativeName>
        <fullName evidence="6">GATA-like protein 1</fullName>
        <shortName evidence="6">GLP-1</shortName>
    </alternativeName>
</protein>
<comment type="function">
    <text evidence="3 4 5">Transcriptional regulator that plays a key role in germ cell development (PubMed:16982049, PubMed:21123517, PubMed:32054698). Determines the oogenic fate by activating key genes for the oogenic program and meiotic prophase entry (PubMed:32054698). Acts downstream of bone morphogenetic protein (BMP) by regulating expression of genes required for the oogenic programs, which are repressed by Polycomb activities in sexually uncommitted germ cells (PubMed:32054698). Regulates expression of STRA8, a central downstream effector for the meiotic program (PubMed:32054698). Acts independently of retinoic acid (RA) (PubMed:32054698). In males, not required for germ-cell sex determination, but required to allow the spermatogonia to efficiently accomplish the meiotic prophase (PubMed:32054698).</text>
</comment>
<comment type="subcellular location">
    <subcellularLocation>
        <location evidence="3">Nucleus</location>
    </subcellularLocation>
</comment>
<comment type="tissue specificity">
    <text evidence="3">Specifically expressed in adult testis and ovary (PubMed:16982049). Expressed at high levels in the somatic cells of the developing gonads, including Leydig cells in the testes and granulosa cells in the ovaries (PubMed:16982049).</text>
</comment>
<comment type="developmental stage">
    <text evidence="4 5">During female embryogenesis, specifically and transiently expressed in germ cells expressing Ddx4: expression starts at 12.0 dpc and decreases after 14.5 dpc, a key period for the sex determination of germ cells (PubMed:21123517, PubMed:32054698). Not expressed in somatic cells or males during embryogenesis (PubMed:32054698).</text>
</comment>
<comment type="induction">
    <text evidence="5">Up-regulated in response to bone morphogenetic proteins (BMPs) signaling.</text>
</comment>
<comment type="disruption phenotype">
    <text evidence="3 5">Mice are viable and normal; however, both males and females are completely infertile (PubMed:16982049, PubMed:32054698). In females, Zglp1 absence leads to a severe block in germ cell development as early as 17.5 dpc (PubMed:16982049). Ovaries at postnatal day (P) 8 and 6 weeks are highly atrophic with no ovarian follicles (PubMed:32054698). Ovaries as early as 17.5 dpc contain a drastically reduced number of cells expressing Ddx4 (PubMed:32054698). In males, Zglp1 absence leads to defective sperm development with a marked reduction in mature spermatids observed as early as postnatal week 1 (PubMed:16982049). Male germ cells develop normally until P7 (PubMed:32054698). Subsequently, they display severe impairment in the first wave of spermatogenesis: unlike in females, germ cells entered into meiotic prophase, but fail to progress beyond the zygotene stage, resulting in a large fraction of abnormal pachytene cells both at P15 and P20 (PubMed:32054698).</text>
</comment>
<evidence type="ECO:0000255" key="1">
    <source>
        <dbReference type="PROSITE-ProRule" id="PRU00094"/>
    </source>
</evidence>
<evidence type="ECO:0000256" key="2">
    <source>
        <dbReference type="SAM" id="MobiDB-lite"/>
    </source>
</evidence>
<evidence type="ECO:0000269" key="3">
    <source>
    </source>
</evidence>
<evidence type="ECO:0000269" key="4">
    <source>
    </source>
</evidence>
<evidence type="ECO:0000269" key="5">
    <source>
    </source>
</evidence>
<evidence type="ECO:0000303" key="6">
    <source>
    </source>
</evidence>
<evidence type="ECO:0000303" key="7">
    <source>
    </source>
</evidence>
<evidence type="ECO:0000305" key="8"/>